<dbReference type="EC" id="3.6.-.-" evidence="1"/>
<dbReference type="EMBL" id="CP001205">
    <property type="protein sequence ID" value="ACK75136.1"/>
    <property type="molecule type" value="Genomic_DNA"/>
</dbReference>
<dbReference type="RefSeq" id="WP_002656499.1">
    <property type="nucleotide sequence ID" value="NC_011728.1"/>
</dbReference>
<dbReference type="SMR" id="B7J1B2"/>
<dbReference type="GeneID" id="56567606"/>
<dbReference type="KEGG" id="bbz:BbuZS7_0179"/>
<dbReference type="HOGENOM" id="CLU_019624_4_1_12"/>
<dbReference type="Proteomes" id="UP000006901">
    <property type="component" value="Chromosome"/>
</dbReference>
<dbReference type="GO" id="GO:0005829">
    <property type="term" value="C:cytosol"/>
    <property type="evidence" value="ECO:0007669"/>
    <property type="project" value="TreeGrafter"/>
</dbReference>
<dbReference type="GO" id="GO:0005525">
    <property type="term" value="F:GTP binding"/>
    <property type="evidence" value="ECO:0007669"/>
    <property type="project" value="UniProtKB-UniRule"/>
</dbReference>
<dbReference type="GO" id="GO:0003924">
    <property type="term" value="F:GTPase activity"/>
    <property type="evidence" value="ECO:0007669"/>
    <property type="project" value="UniProtKB-UniRule"/>
</dbReference>
<dbReference type="GO" id="GO:0046872">
    <property type="term" value="F:metal ion binding"/>
    <property type="evidence" value="ECO:0007669"/>
    <property type="project" value="UniProtKB-KW"/>
</dbReference>
<dbReference type="GO" id="GO:0030488">
    <property type="term" value="P:tRNA methylation"/>
    <property type="evidence" value="ECO:0007669"/>
    <property type="project" value="TreeGrafter"/>
</dbReference>
<dbReference type="GO" id="GO:0002098">
    <property type="term" value="P:tRNA wobble uridine modification"/>
    <property type="evidence" value="ECO:0007669"/>
    <property type="project" value="TreeGrafter"/>
</dbReference>
<dbReference type="CDD" id="cd04164">
    <property type="entry name" value="trmE"/>
    <property type="match status" value="1"/>
</dbReference>
<dbReference type="CDD" id="cd14858">
    <property type="entry name" value="TrmE_N"/>
    <property type="match status" value="1"/>
</dbReference>
<dbReference type="Gene3D" id="3.40.50.300">
    <property type="entry name" value="P-loop containing nucleotide triphosphate hydrolases"/>
    <property type="match status" value="1"/>
</dbReference>
<dbReference type="Gene3D" id="3.30.1360.120">
    <property type="entry name" value="Probable tRNA modification gtpase trme, domain 1"/>
    <property type="match status" value="1"/>
</dbReference>
<dbReference type="Gene3D" id="1.20.120.430">
    <property type="entry name" value="tRNA modification GTPase MnmE domain 2"/>
    <property type="match status" value="1"/>
</dbReference>
<dbReference type="HAMAP" id="MF_00379">
    <property type="entry name" value="GTPase_MnmE"/>
    <property type="match status" value="1"/>
</dbReference>
<dbReference type="InterPro" id="IPR031168">
    <property type="entry name" value="G_TrmE"/>
</dbReference>
<dbReference type="InterPro" id="IPR006073">
    <property type="entry name" value="GTP-bd"/>
</dbReference>
<dbReference type="InterPro" id="IPR018948">
    <property type="entry name" value="GTP-bd_TrmE_N"/>
</dbReference>
<dbReference type="InterPro" id="IPR004520">
    <property type="entry name" value="GTPase_MnmE"/>
</dbReference>
<dbReference type="InterPro" id="IPR027368">
    <property type="entry name" value="MnmE_dom2"/>
</dbReference>
<dbReference type="InterPro" id="IPR025867">
    <property type="entry name" value="MnmE_helical"/>
</dbReference>
<dbReference type="InterPro" id="IPR027417">
    <property type="entry name" value="P-loop_NTPase"/>
</dbReference>
<dbReference type="InterPro" id="IPR005225">
    <property type="entry name" value="Small_GTP-bd"/>
</dbReference>
<dbReference type="InterPro" id="IPR027266">
    <property type="entry name" value="TrmE/GcvT_dom1"/>
</dbReference>
<dbReference type="NCBIfam" id="TIGR00450">
    <property type="entry name" value="mnmE_trmE_thdF"/>
    <property type="match status" value="1"/>
</dbReference>
<dbReference type="NCBIfam" id="TIGR00231">
    <property type="entry name" value="small_GTP"/>
    <property type="match status" value="1"/>
</dbReference>
<dbReference type="PANTHER" id="PTHR42714">
    <property type="entry name" value="TRNA MODIFICATION GTPASE GTPBP3"/>
    <property type="match status" value="1"/>
</dbReference>
<dbReference type="PANTHER" id="PTHR42714:SF2">
    <property type="entry name" value="TRNA MODIFICATION GTPASE GTPBP3, MITOCHONDRIAL"/>
    <property type="match status" value="1"/>
</dbReference>
<dbReference type="Pfam" id="PF01926">
    <property type="entry name" value="MMR_HSR1"/>
    <property type="match status" value="1"/>
</dbReference>
<dbReference type="Pfam" id="PF12631">
    <property type="entry name" value="MnmE_helical"/>
    <property type="match status" value="1"/>
</dbReference>
<dbReference type="Pfam" id="PF10396">
    <property type="entry name" value="TrmE_N"/>
    <property type="match status" value="1"/>
</dbReference>
<dbReference type="SUPFAM" id="SSF52540">
    <property type="entry name" value="P-loop containing nucleoside triphosphate hydrolases"/>
    <property type="match status" value="1"/>
</dbReference>
<dbReference type="PROSITE" id="PS51709">
    <property type="entry name" value="G_TRME"/>
    <property type="match status" value="1"/>
</dbReference>
<sequence length="464" mass="51606">MSKFFERDDDIVALATPFLSSALCVIRSSGASSISKFSKIFSNHSALNSASGNTIHYGYILDSENGCKVDEVVVCLYRAPKSFTGQDAIEVMAHGSVIGIKKIIDLFLKSGFRMAEPGEFTLRAFLAKKIDLTKAEAIHEIIFAKTNKTYSLAVNKLSGALFVKIDAIKKSILNFLSAVSVYLDYEVDDHEISIPFDLILSSKAELKKLINSYKVYEKIDNGVALVLAGSVNAGKSSLFNLFLKKDRSIVSSYPGTTRDYIEASFELDGILFNLFDTAGLRDADNFVERLGIEKSNSLIKEASLVIYVIDVSSNLTKDDFLFIDSNKSNSKILFVLNKIDLKINKSTEEFVRSKVLNSSNLIMISTKNLEGIDILYDKIRALISYERVEIGLDDIIISSNRQMQLLEKAYALILDLLSKIDRQVSYDMLAFDAYEIINCLGEITGEVSSEDVLDNMFKNFCLGK</sequence>
<accession>B7J1B2</accession>
<comment type="function">
    <text evidence="1">Exhibits a very high intrinsic GTPase hydrolysis rate. Involved in the addition of a carboxymethylaminomethyl (cmnm) group at the wobble position (U34) of certain tRNAs, forming tRNA-cmnm(5)s(2)U34.</text>
</comment>
<comment type="cofactor">
    <cofactor evidence="1">
        <name>K(+)</name>
        <dbReference type="ChEBI" id="CHEBI:29103"/>
    </cofactor>
    <text evidence="1">Binds 1 potassium ion per subunit.</text>
</comment>
<comment type="subunit">
    <text evidence="1">Homodimer. Heterotetramer of two MnmE and two MnmG subunits.</text>
</comment>
<comment type="subcellular location">
    <subcellularLocation>
        <location evidence="1">Cytoplasm</location>
    </subcellularLocation>
</comment>
<comment type="similarity">
    <text evidence="1">Belongs to the TRAFAC class TrmE-Era-EngA-EngB-Septin-like GTPase superfamily. TrmE GTPase family.</text>
</comment>
<proteinExistence type="inferred from homology"/>
<organism>
    <name type="scientific">Borreliella burgdorferi (strain ZS7)</name>
    <name type="common">Borrelia burgdorferi</name>
    <dbReference type="NCBI Taxonomy" id="445985"/>
    <lineage>
        <taxon>Bacteria</taxon>
        <taxon>Pseudomonadati</taxon>
        <taxon>Spirochaetota</taxon>
        <taxon>Spirochaetia</taxon>
        <taxon>Spirochaetales</taxon>
        <taxon>Borreliaceae</taxon>
        <taxon>Borreliella</taxon>
    </lineage>
</organism>
<protein>
    <recommendedName>
        <fullName evidence="1">tRNA modification GTPase MnmE</fullName>
        <ecNumber evidence="1">3.6.-.-</ecNumber>
    </recommendedName>
</protein>
<evidence type="ECO:0000255" key="1">
    <source>
        <dbReference type="HAMAP-Rule" id="MF_00379"/>
    </source>
</evidence>
<keyword id="KW-0963">Cytoplasm</keyword>
<keyword id="KW-0342">GTP-binding</keyword>
<keyword id="KW-0378">Hydrolase</keyword>
<keyword id="KW-0460">Magnesium</keyword>
<keyword id="KW-0479">Metal-binding</keyword>
<keyword id="KW-0547">Nucleotide-binding</keyword>
<keyword id="KW-0630">Potassium</keyword>
<keyword id="KW-0819">tRNA processing</keyword>
<feature type="chain" id="PRO_1000122109" description="tRNA modification GTPase MnmE">
    <location>
        <begin position="1"/>
        <end position="464"/>
    </location>
</feature>
<feature type="domain" description="TrmE-type G">
    <location>
        <begin position="222"/>
        <end position="384"/>
    </location>
</feature>
<feature type="binding site" evidence="1">
    <location>
        <position position="27"/>
    </location>
    <ligand>
        <name>(6S)-5-formyl-5,6,7,8-tetrahydrofolate</name>
        <dbReference type="ChEBI" id="CHEBI:57457"/>
    </ligand>
</feature>
<feature type="binding site" evidence="1">
    <location>
        <position position="90"/>
    </location>
    <ligand>
        <name>(6S)-5-formyl-5,6,7,8-tetrahydrofolate</name>
        <dbReference type="ChEBI" id="CHEBI:57457"/>
    </ligand>
</feature>
<feature type="binding site" evidence="1">
    <location>
        <position position="129"/>
    </location>
    <ligand>
        <name>(6S)-5-formyl-5,6,7,8-tetrahydrofolate</name>
        <dbReference type="ChEBI" id="CHEBI:57457"/>
    </ligand>
</feature>
<feature type="binding site" evidence="1">
    <location>
        <begin position="232"/>
        <end position="237"/>
    </location>
    <ligand>
        <name>GTP</name>
        <dbReference type="ChEBI" id="CHEBI:37565"/>
    </ligand>
</feature>
<feature type="binding site" evidence="1">
    <location>
        <position position="236"/>
    </location>
    <ligand>
        <name>Mg(2+)</name>
        <dbReference type="ChEBI" id="CHEBI:18420"/>
    </ligand>
</feature>
<feature type="binding site" evidence="1">
    <location>
        <begin position="251"/>
        <end position="257"/>
    </location>
    <ligand>
        <name>GTP</name>
        <dbReference type="ChEBI" id="CHEBI:37565"/>
    </ligand>
</feature>
<feature type="binding site" evidence="1">
    <location>
        <position position="251"/>
    </location>
    <ligand>
        <name>K(+)</name>
        <dbReference type="ChEBI" id="CHEBI:29103"/>
    </ligand>
</feature>
<feature type="binding site" evidence="1">
    <location>
        <position position="257"/>
    </location>
    <ligand>
        <name>Mg(2+)</name>
        <dbReference type="ChEBI" id="CHEBI:18420"/>
    </ligand>
</feature>
<feature type="binding site" evidence="1">
    <location>
        <begin position="276"/>
        <end position="279"/>
    </location>
    <ligand>
        <name>GTP</name>
        <dbReference type="ChEBI" id="CHEBI:37565"/>
    </ligand>
</feature>
<feature type="binding site" evidence="1">
    <location>
        <position position="464"/>
    </location>
    <ligand>
        <name>(6S)-5-formyl-5,6,7,8-tetrahydrofolate</name>
        <dbReference type="ChEBI" id="CHEBI:57457"/>
    </ligand>
</feature>
<reference key="1">
    <citation type="journal article" date="2011" name="J. Bacteriol.">
        <title>Whole-genome sequences of thirteen isolates of Borrelia burgdorferi.</title>
        <authorList>
            <person name="Schutzer S.E."/>
            <person name="Fraser-Liggett C.M."/>
            <person name="Casjens S.R."/>
            <person name="Qiu W.G."/>
            <person name="Dunn J.J."/>
            <person name="Mongodin E.F."/>
            <person name="Luft B.J."/>
        </authorList>
    </citation>
    <scope>NUCLEOTIDE SEQUENCE [LARGE SCALE GENOMIC DNA]</scope>
    <source>
        <strain>ZS7</strain>
    </source>
</reference>
<name>MNME_BORBZ</name>
<gene>
    <name evidence="1" type="primary">mnmE</name>
    <name evidence="1" type="synonym">trmE</name>
    <name type="ordered locus">BbuZS7_0179</name>
</gene>